<organism>
    <name type="scientific">Heliocidaris erythrogramma</name>
    <name type="common">Sea urchin</name>
    <dbReference type="NCBI Taxonomy" id="7634"/>
    <lineage>
        <taxon>Eukaryota</taxon>
        <taxon>Metazoa</taxon>
        <taxon>Echinodermata</taxon>
        <taxon>Eleutherozoa</taxon>
        <taxon>Echinozoa</taxon>
        <taxon>Echinoidea</taxon>
        <taxon>Euechinoidea</taxon>
        <taxon>Echinacea</taxon>
        <taxon>Camarodonta</taxon>
        <taxon>Echinidea</taxon>
        <taxon>Echinometridae</taxon>
        <taxon>Heliocidaris</taxon>
    </lineage>
</organism>
<feature type="chain" id="PRO_0000292434" description="Homeobox protein orthopedia">
    <location>
        <begin position="1"/>
        <end position="363"/>
    </location>
</feature>
<feature type="DNA-binding region" description="Homeobox" evidence="1">
    <location>
        <begin position="114"/>
        <end position="173"/>
    </location>
</feature>
<feature type="region of interest" description="Disordered" evidence="3">
    <location>
        <begin position="48"/>
        <end position="119"/>
    </location>
</feature>
<feature type="region of interest" description="Disordered" evidence="3">
    <location>
        <begin position="300"/>
        <end position="328"/>
    </location>
</feature>
<feature type="short sequence motif" description="OAR" evidence="2">
    <location>
        <begin position="342"/>
        <end position="355"/>
    </location>
</feature>
<feature type="compositionally biased region" description="Gly residues" evidence="3">
    <location>
        <begin position="69"/>
        <end position="97"/>
    </location>
</feature>
<feature type="compositionally biased region" description="Low complexity" evidence="3">
    <location>
        <begin position="300"/>
        <end position="313"/>
    </location>
</feature>
<keyword id="KW-0238">DNA-binding</keyword>
<keyword id="KW-0371">Homeobox</keyword>
<keyword id="KW-0539">Nucleus</keyword>
<keyword id="KW-0804">Transcription</keyword>
<keyword id="KW-0805">Transcription regulation</keyword>
<sequence length="363" mass="38037">MERTLAHVPSMELSTEALLVTGGLDNTNKMITSSAVRNDDGTMISQHSEKVSYGTSGAPDGSTPPVTAAGGGSEGNGIGGGGGGGGGGGMVGDGTGHSVGSSGSGNDDDKPAKQKRHRTRFTPAQLNELERNFAKTHYPDIFMREEIAMRVGLTESRVQVWFQNRRAKWKKRKKTTNVFRTPGALLPSHGLAQFPSPMNDSFCNFHGQDTRGWPAMSGMTTHMAPHMTTHMPSHQMSQMGGGPGSALALPPSLPRQGLGQTMQQQSVNCSMGQTTGLNTLSMGTNGSMGSMTSMYQPSLGGMTTGSMSSGLSSPSPPNLPVTDSSTDLSCSVSDAGDMWRGTSIASLRRKALEHAASLNGIFR</sequence>
<proteinExistence type="evidence at transcript level"/>
<comment type="subcellular location">
    <subcellularLocation>
        <location evidence="1 2">Nucleus</location>
    </subcellularLocation>
</comment>
<comment type="miscellaneous">
    <text>In contrast to its counterpart in Heliocidaris tuberculata, not involved in larval skeletal patterning.</text>
</comment>
<comment type="similarity">
    <text evidence="4">Belongs to the paired homeobox family. Bicoid subfamily.</text>
</comment>
<name>OTP_HELER</name>
<accession>Q6SR69</accession>
<protein>
    <recommendedName>
        <fullName>Homeobox protein orthopedia</fullName>
    </recommendedName>
</protein>
<evidence type="ECO:0000255" key="1">
    <source>
        <dbReference type="PROSITE-ProRule" id="PRU00108"/>
    </source>
</evidence>
<evidence type="ECO:0000255" key="2">
    <source>
        <dbReference type="PROSITE-ProRule" id="PRU00138"/>
    </source>
</evidence>
<evidence type="ECO:0000256" key="3">
    <source>
        <dbReference type="SAM" id="MobiDB-lite"/>
    </source>
</evidence>
<evidence type="ECO:0000305" key="4"/>
<reference key="1">
    <citation type="journal article" date="2003" name="J. Exp. Zool. B Mol. Dev. Evol.">
        <title>Evolution of OTP-independent larval skeleton patterning in the direct-developing sea urchin, Heliocidaris erythrogramma.</title>
        <authorList>
            <person name="Zhou N."/>
            <person name="Wilson K.A."/>
            <person name="Andrews M.E."/>
            <person name="Kauffman J.S."/>
            <person name="Raff R.A."/>
        </authorList>
    </citation>
    <scope>NUCLEOTIDE SEQUENCE [MRNA]</scope>
</reference>
<gene>
    <name type="primary">Otp</name>
</gene>
<dbReference type="EMBL" id="AY452139">
    <property type="protein sequence ID" value="AAS00591.1"/>
    <property type="molecule type" value="mRNA"/>
</dbReference>
<dbReference type="SMR" id="Q6SR69"/>
<dbReference type="GO" id="GO:0005634">
    <property type="term" value="C:nucleus"/>
    <property type="evidence" value="ECO:0007669"/>
    <property type="project" value="UniProtKB-SubCell"/>
</dbReference>
<dbReference type="GO" id="GO:0003677">
    <property type="term" value="F:DNA binding"/>
    <property type="evidence" value="ECO:0007669"/>
    <property type="project" value="UniProtKB-KW"/>
</dbReference>
<dbReference type="GO" id="GO:0000981">
    <property type="term" value="F:DNA-binding transcription factor activity, RNA polymerase II-specific"/>
    <property type="evidence" value="ECO:0007669"/>
    <property type="project" value="InterPro"/>
</dbReference>
<dbReference type="GO" id="GO:0030182">
    <property type="term" value="P:neuron differentiation"/>
    <property type="evidence" value="ECO:0007669"/>
    <property type="project" value="TreeGrafter"/>
</dbReference>
<dbReference type="CDD" id="cd00086">
    <property type="entry name" value="homeodomain"/>
    <property type="match status" value="1"/>
</dbReference>
<dbReference type="FunFam" id="1.10.10.60:FF:000719">
    <property type="entry name" value="Homeobox protein orthopedia-like Protein"/>
    <property type="match status" value="1"/>
</dbReference>
<dbReference type="Gene3D" id="1.10.10.60">
    <property type="entry name" value="Homeodomain-like"/>
    <property type="match status" value="1"/>
</dbReference>
<dbReference type="InterPro" id="IPR001356">
    <property type="entry name" value="HD"/>
</dbReference>
<dbReference type="InterPro" id="IPR017970">
    <property type="entry name" value="Homeobox_CS"/>
</dbReference>
<dbReference type="InterPro" id="IPR009057">
    <property type="entry name" value="Homeodomain-like_sf"/>
</dbReference>
<dbReference type="InterPro" id="IPR000047">
    <property type="entry name" value="HTH_motif"/>
</dbReference>
<dbReference type="InterPro" id="IPR003654">
    <property type="entry name" value="OAR_dom"/>
</dbReference>
<dbReference type="InterPro" id="IPR051895">
    <property type="entry name" value="OTP_Homeobox"/>
</dbReference>
<dbReference type="PANTHER" id="PTHR46770">
    <property type="entry name" value="HOMEOBOX PROTEIN ORTHOPEDIA"/>
    <property type="match status" value="1"/>
</dbReference>
<dbReference type="PANTHER" id="PTHR46770:SF1">
    <property type="entry name" value="HOMEOBOX PROTEIN ORTHOPEDIA"/>
    <property type="match status" value="1"/>
</dbReference>
<dbReference type="Pfam" id="PF00046">
    <property type="entry name" value="Homeodomain"/>
    <property type="match status" value="1"/>
</dbReference>
<dbReference type="Pfam" id="PF03826">
    <property type="entry name" value="OAR"/>
    <property type="match status" value="1"/>
</dbReference>
<dbReference type="PRINTS" id="PR00031">
    <property type="entry name" value="HTHREPRESSR"/>
</dbReference>
<dbReference type="SMART" id="SM00389">
    <property type="entry name" value="HOX"/>
    <property type="match status" value="1"/>
</dbReference>
<dbReference type="SUPFAM" id="SSF46689">
    <property type="entry name" value="Homeodomain-like"/>
    <property type="match status" value="1"/>
</dbReference>
<dbReference type="PROSITE" id="PS00027">
    <property type="entry name" value="HOMEOBOX_1"/>
    <property type="match status" value="1"/>
</dbReference>
<dbReference type="PROSITE" id="PS50071">
    <property type="entry name" value="HOMEOBOX_2"/>
    <property type="match status" value="1"/>
</dbReference>
<dbReference type="PROSITE" id="PS50803">
    <property type="entry name" value="OAR"/>
    <property type="match status" value="1"/>
</dbReference>